<reference key="1">
    <citation type="submission" date="2006-08" db="EMBL/GenBank/DDBJ databases">
        <title>Complete sequence of Maricaulis maris MCS10.</title>
        <authorList>
            <consortium name="US DOE Joint Genome Institute"/>
            <person name="Copeland A."/>
            <person name="Lucas S."/>
            <person name="Lapidus A."/>
            <person name="Barry K."/>
            <person name="Detter J.C."/>
            <person name="Glavina del Rio T."/>
            <person name="Hammon N."/>
            <person name="Israni S."/>
            <person name="Dalin E."/>
            <person name="Tice H."/>
            <person name="Pitluck S."/>
            <person name="Saunders E."/>
            <person name="Brettin T."/>
            <person name="Bruce D."/>
            <person name="Han C."/>
            <person name="Tapia R."/>
            <person name="Gilna P."/>
            <person name="Schmutz J."/>
            <person name="Larimer F."/>
            <person name="Land M."/>
            <person name="Hauser L."/>
            <person name="Kyrpides N."/>
            <person name="Mikhailova N."/>
            <person name="Viollier P."/>
            <person name="Stephens C."/>
            <person name="Richardson P."/>
        </authorList>
    </citation>
    <scope>NUCLEOTIDE SEQUENCE [LARGE SCALE GENOMIC DNA]</scope>
    <source>
        <strain>MCS10</strain>
    </source>
</reference>
<feature type="chain" id="PRO_1000206138" description="Thiazole synthase">
    <location>
        <begin position="1"/>
        <end position="267"/>
    </location>
</feature>
<feature type="active site" description="Schiff-base intermediate with DXP" evidence="1">
    <location>
        <position position="110"/>
    </location>
</feature>
<feature type="binding site" evidence="1">
    <location>
        <position position="171"/>
    </location>
    <ligand>
        <name>1-deoxy-D-xylulose 5-phosphate</name>
        <dbReference type="ChEBI" id="CHEBI:57792"/>
    </ligand>
</feature>
<feature type="binding site" evidence="1">
    <location>
        <begin position="197"/>
        <end position="198"/>
    </location>
    <ligand>
        <name>1-deoxy-D-xylulose 5-phosphate</name>
        <dbReference type="ChEBI" id="CHEBI:57792"/>
    </ligand>
</feature>
<feature type="binding site" evidence="1">
    <location>
        <begin position="219"/>
        <end position="220"/>
    </location>
    <ligand>
        <name>1-deoxy-D-xylulose 5-phosphate</name>
        <dbReference type="ChEBI" id="CHEBI:57792"/>
    </ligand>
</feature>
<accession>Q0AQ76</accession>
<keyword id="KW-0963">Cytoplasm</keyword>
<keyword id="KW-1185">Reference proteome</keyword>
<keyword id="KW-0704">Schiff base</keyword>
<keyword id="KW-0784">Thiamine biosynthesis</keyword>
<keyword id="KW-0808">Transferase</keyword>
<sequence length="267" mass="28793">MEDAVTMDTAFEDKPLVVAGRTFTSRLIIGTGKYKTYAQNAQALEASGAEMITVAIRRVNLSNPDEPRLVDFISPDDYTFLPNTAGCFTGEDAVRTLRLAREAGGWNLVKLEVLSDPKHLYPDMAETLRAAELLIKDGFDVMVYCSDDPVYARKLEEIGCCAIMPLGAPIGSGLGIQNPVNIRLIIEQTKVPVIVDAGVGTASDATVAMELGCDGVLMNTAIAEAKDPIRMARAMRHAVIAGRESYLAGRMPKKRYADPSSPLSGLI</sequence>
<proteinExistence type="inferred from homology"/>
<evidence type="ECO:0000255" key="1">
    <source>
        <dbReference type="HAMAP-Rule" id="MF_00443"/>
    </source>
</evidence>
<gene>
    <name evidence="1" type="primary">thiG</name>
    <name type="ordered locus">Mmar10_1269</name>
</gene>
<comment type="function">
    <text evidence="1">Catalyzes the rearrangement of 1-deoxy-D-xylulose 5-phosphate (DXP) to produce the thiazole phosphate moiety of thiamine. Sulfur is provided by the thiocarboxylate moiety of the carrier protein ThiS. In vitro, sulfur can be provided by H(2)S.</text>
</comment>
<comment type="catalytic activity">
    <reaction evidence="1">
        <text>[ThiS sulfur-carrier protein]-C-terminal-Gly-aminoethanethioate + 2-iminoacetate + 1-deoxy-D-xylulose 5-phosphate = [ThiS sulfur-carrier protein]-C-terminal Gly-Gly + 2-[(2R,5Z)-2-carboxy-4-methylthiazol-5(2H)-ylidene]ethyl phosphate + 2 H2O + H(+)</text>
        <dbReference type="Rhea" id="RHEA:26297"/>
        <dbReference type="Rhea" id="RHEA-COMP:12909"/>
        <dbReference type="Rhea" id="RHEA-COMP:19908"/>
        <dbReference type="ChEBI" id="CHEBI:15377"/>
        <dbReference type="ChEBI" id="CHEBI:15378"/>
        <dbReference type="ChEBI" id="CHEBI:57792"/>
        <dbReference type="ChEBI" id="CHEBI:62899"/>
        <dbReference type="ChEBI" id="CHEBI:77846"/>
        <dbReference type="ChEBI" id="CHEBI:90778"/>
        <dbReference type="ChEBI" id="CHEBI:232372"/>
        <dbReference type="EC" id="2.8.1.10"/>
    </reaction>
</comment>
<comment type="pathway">
    <text evidence="1">Cofactor biosynthesis; thiamine diphosphate biosynthesis.</text>
</comment>
<comment type="subunit">
    <text evidence="1">Homotetramer. Forms heterodimers with either ThiH or ThiS.</text>
</comment>
<comment type="subcellular location">
    <subcellularLocation>
        <location evidence="1">Cytoplasm</location>
    </subcellularLocation>
</comment>
<comment type="similarity">
    <text evidence="1">Belongs to the ThiG family.</text>
</comment>
<dbReference type="EC" id="2.8.1.10" evidence="1"/>
<dbReference type="EMBL" id="CP000449">
    <property type="protein sequence ID" value="ABI65561.1"/>
    <property type="molecule type" value="Genomic_DNA"/>
</dbReference>
<dbReference type="RefSeq" id="WP_011643208.1">
    <property type="nucleotide sequence ID" value="NC_008347.1"/>
</dbReference>
<dbReference type="SMR" id="Q0AQ76"/>
<dbReference type="STRING" id="394221.Mmar10_1269"/>
<dbReference type="KEGG" id="mmr:Mmar10_1269"/>
<dbReference type="eggNOG" id="COG2022">
    <property type="taxonomic scope" value="Bacteria"/>
</dbReference>
<dbReference type="HOGENOM" id="CLU_062233_1_0_5"/>
<dbReference type="UniPathway" id="UPA00060"/>
<dbReference type="Proteomes" id="UP000001964">
    <property type="component" value="Chromosome"/>
</dbReference>
<dbReference type="GO" id="GO:0005737">
    <property type="term" value="C:cytoplasm"/>
    <property type="evidence" value="ECO:0007669"/>
    <property type="project" value="UniProtKB-SubCell"/>
</dbReference>
<dbReference type="GO" id="GO:1990107">
    <property type="term" value="F:thiazole synthase activity"/>
    <property type="evidence" value="ECO:0007669"/>
    <property type="project" value="UniProtKB-EC"/>
</dbReference>
<dbReference type="GO" id="GO:0009229">
    <property type="term" value="P:thiamine diphosphate biosynthetic process"/>
    <property type="evidence" value="ECO:0007669"/>
    <property type="project" value="UniProtKB-UniRule"/>
</dbReference>
<dbReference type="CDD" id="cd04728">
    <property type="entry name" value="ThiG"/>
    <property type="match status" value="1"/>
</dbReference>
<dbReference type="Gene3D" id="3.20.20.70">
    <property type="entry name" value="Aldolase class I"/>
    <property type="match status" value="1"/>
</dbReference>
<dbReference type="HAMAP" id="MF_00443">
    <property type="entry name" value="ThiG"/>
    <property type="match status" value="1"/>
</dbReference>
<dbReference type="InterPro" id="IPR013785">
    <property type="entry name" value="Aldolase_TIM"/>
</dbReference>
<dbReference type="InterPro" id="IPR033983">
    <property type="entry name" value="Thiazole_synthase_ThiG"/>
</dbReference>
<dbReference type="InterPro" id="IPR008867">
    <property type="entry name" value="ThiG"/>
</dbReference>
<dbReference type="PANTHER" id="PTHR34266">
    <property type="entry name" value="THIAZOLE SYNTHASE"/>
    <property type="match status" value="1"/>
</dbReference>
<dbReference type="PANTHER" id="PTHR34266:SF2">
    <property type="entry name" value="THIAZOLE SYNTHASE"/>
    <property type="match status" value="1"/>
</dbReference>
<dbReference type="Pfam" id="PF05690">
    <property type="entry name" value="ThiG"/>
    <property type="match status" value="1"/>
</dbReference>
<dbReference type="SUPFAM" id="SSF110399">
    <property type="entry name" value="ThiG-like"/>
    <property type="match status" value="1"/>
</dbReference>
<protein>
    <recommendedName>
        <fullName evidence="1">Thiazole synthase</fullName>
        <ecNumber evidence="1">2.8.1.10</ecNumber>
    </recommendedName>
</protein>
<name>THIG_MARMM</name>
<organism>
    <name type="scientific">Maricaulis maris (strain MCS10)</name>
    <name type="common">Caulobacter maris</name>
    <dbReference type="NCBI Taxonomy" id="394221"/>
    <lineage>
        <taxon>Bacteria</taxon>
        <taxon>Pseudomonadati</taxon>
        <taxon>Pseudomonadota</taxon>
        <taxon>Alphaproteobacteria</taxon>
        <taxon>Maricaulales</taxon>
        <taxon>Maricaulaceae</taxon>
        <taxon>Maricaulis</taxon>
    </lineage>
</organism>